<name>PRP22_ARATH</name>
<proteinExistence type="evidence at protein level"/>
<evidence type="ECO:0000255" key="1">
    <source>
        <dbReference type="PROSITE-ProRule" id="PRU00541"/>
    </source>
</evidence>
<evidence type="ECO:0000255" key="2">
    <source>
        <dbReference type="PROSITE-ProRule" id="PRU00542"/>
    </source>
</evidence>
<evidence type="ECO:0000256" key="3">
    <source>
        <dbReference type="SAM" id="MobiDB-lite"/>
    </source>
</evidence>
<evidence type="ECO:0000269" key="4">
    <source>
    </source>
</evidence>
<evidence type="ECO:0000303" key="5">
    <source>
    </source>
</evidence>
<evidence type="ECO:0000305" key="6"/>
<evidence type="ECO:0000312" key="7">
    <source>
        <dbReference type="Araport" id="AT1G26370"/>
    </source>
</evidence>
<evidence type="ECO:0000312" key="8">
    <source>
        <dbReference type="EMBL" id="AAF98584.1"/>
    </source>
</evidence>
<reference key="1">
    <citation type="journal article" date="2000" name="Nature">
        <title>Sequence and analysis of chromosome 1 of the plant Arabidopsis thaliana.</title>
        <authorList>
            <person name="Theologis A."/>
            <person name="Ecker J.R."/>
            <person name="Palm C.J."/>
            <person name="Federspiel N.A."/>
            <person name="Kaul S."/>
            <person name="White O."/>
            <person name="Alonso J."/>
            <person name="Altafi H."/>
            <person name="Araujo R."/>
            <person name="Bowman C.L."/>
            <person name="Brooks S.Y."/>
            <person name="Buehler E."/>
            <person name="Chan A."/>
            <person name="Chao Q."/>
            <person name="Chen H."/>
            <person name="Cheuk R.F."/>
            <person name="Chin C.W."/>
            <person name="Chung M.K."/>
            <person name="Conn L."/>
            <person name="Conway A.B."/>
            <person name="Conway A.R."/>
            <person name="Creasy T.H."/>
            <person name="Dewar K."/>
            <person name="Dunn P."/>
            <person name="Etgu P."/>
            <person name="Feldblyum T.V."/>
            <person name="Feng J.-D."/>
            <person name="Fong B."/>
            <person name="Fujii C.Y."/>
            <person name="Gill J.E."/>
            <person name="Goldsmith A.D."/>
            <person name="Haas B."/>
            <person name="Hansen N.F."/>
            <person name="Hughes B."/>
            <person name="Huizar L."/>
            <person name="Hunter J.L."/>
            <person name="Jenkins J."/>
            <person name="Johnson-Hopson C."/>
            <person name="Khan S."/>
            <person name="Khaykin E."/>
            <person name="Kim C.J."/>
            <person name="Koo H.L."/>
            <person name="Kremenetskaia I."/>
            <person name="Kurtz D.B."/>
            <person name="Kwan A."/>
            <person name="Lam B."/>
            <person name="Langin-Hooper S."/>
            <person name="Lee A."/>
            <person name="Lee J.M."/>
            <person name="Lenz C.A."/>
            <person name="Li J.H."/>
            <person name="Li Y.-P."/>
            <person name="Lin X."/>
            <person name="Liu S.X."/>
            <person name="Liu Z.A."/>
            <person name="Luros J.S."/>
            <person name="Maiti R."/>
            <person name="Marziali A."/>
            <person name="Militscher J."/>
            <person name="Miranda M."/>
            <person name="Nguyen M."/>
            <person name="Nierman W.C."/>
            <person name="Osborne B.I."/>
            <person name="Pai G."/>
            <person name="Peterson J."/>
            <person name="Pham P.K."/>
            <person name="Rizzo M."/>
            <person name="Rooney T."/>
            <person name="Rowley D."/>
            <person name="Sakano H."/>
            <person name="Salzberg S.L."/>
            <person name="Schwartz J.R."/>
            <person name="Shinn P."/>
            <person name="Southwick A.M."/>
            <person name="Sun H."/>
            <person name="Tallon L.J."/>
            <person name="Tambunga G."/>
            <person name="Toriumi M.J."/>
            <person name="Town C.D."/>
            <person name="Utterback T."/>
            <person name="Van Aken S."/>
            <person name="Vaysberg M."/>
            <person name="Vysotskaia V.S."/>
            <person name="Walker M."/>
            <person name="Wu D."/>
            <person name="Yu G."/>
            <person name="Fraser C.M."/>
            <person name="Venter J.C."/>
            <person name="Davis R.W."/>
        </authorList>
    </citation>
    <scope>NUCLEOTIDE SEQUENCE [LARGE SCALE GENOMIC DNA]</scope>
    <source>
        <strain>cv. Columbia</strain>
    </source>
</reference>
<reference key="2">
    <citation type="journal article" date="2017" name="Plant J.">
        <title>Araport11: a complete reannotation of the Arabidopsis thaliana reference genome.</title>
        <authorList>
            <person name="Cheng C.Y."/>
            <person name="Krishnakumar V."/>
            <person name="Chan A.P."/>
            <person name="Thibaud-Nissen F."/>
            <person name="Schobel S."/>
            <person name="Town C.D."/>
        </authorList>
    </citation>
    <scope>GENOME REANNOTATION</scope>
    <source>
        <strain>cv. Columbia</strain>
    </source>
</reference>
<reference key="3">
    <citation type="journal article" date="2003" name="Science">
        <title>Empirical analysis of transcriptional activity in the Arabidopsis genome.</title>
        <authorList>
            <person name="Yamada K."/>
            <person name="Lim J."/>
            <person name="Dale J.M."/>
            <person name="Chen H."/>
            <person name="Shinn P."/>
            <person name="Palm C.J."/>
            <person name="Southwick A.M."/>
            <person name="Wu H.C."/>
            <person name="Kim C.J."/>
            <person name="Nguyen M."/>
            <person name="Pham P.K."/>
            <person name="Cheuk R.F."/>
            <person name="Karlin-Newmann G."/>
            <person name="Liu S.X."/>
            <person name="Lam B."/>
            <person name="Sakano H."/>
            <person name="Wu T."/>
            <person name="Yu G."/>
            <person name="Miranda M."/>
            <person name="Quach H.L."/>
            <person name="Tripp M."/>
            <person name="Chang C.H."/>
            <person name="Lee J.M."/>
            <person name="Toriumi M.J."/>
            <person name="Chan M.M."/>
            <person name="Tang C.C."/>
            <person name="Onodera C.S."/>
            <person name="Deng J.M."/>
            <person name="Akiyama K."/>
            <person name="Ansari Y."/>
            <person name="Arakawa T."/>
            <person name="Banh J."/>
            <person name="Banno F."/>
            <person name="Bowser L."/>
            <person name="Brooks S.Y."/>
            <person name="Carninci P."/>
            <person name="Chao Q."/>
            <person name="Choy N."/>
            <person name="Enju A."/>
            <person name="Goldsmith A.D."/>
            <person name="Gurjal M."/>
            <person name="Hansen N.F."/>
            <person name="Hayashizaki Y."/>
            <person name="Johnson-Hopson C."/>
            <person name="Hsuan V.W."/>
            <person name="Iida K."/>
            <person name="Karnes M."/>
            <person name="Khan S."/>
            <person name="Koesema E."/>
            <person name="Ishida J."/>
            <person name="Jiang P.X."/>
            <person name="Jones T."/>
            <person name="Kawai J."/>
            <person name="Kamiya A."/>
            <person name="Meyers C."/>
            <person name="Nakajima M."/>
            <person name="Narusaka M."/>
            <person name="Seki M."/>
            <person name="Sakurai T."/>
            <person name="Satou M."/>
            <person name="Tamse R."/>
            <person name="Vaysberg M."/>
            <person name="Wallender E.K."/>
            <person name="Wong C."/>
            <person name="Yamamura Y."/>
            <person name="Yuan S."/>
            <person name="Shinozaki K."/>
            <person name="Davis R.W."/>
            <person name="Theologis A."/>
            <person name="Ecker J.R."/>
        </authorList>
    </citation>
    <scope>NUCLEOTIDE SEQUENCE [LARGE SCALE MRNA]</scope>
    <source>
        <strain>cv. Columbia</strain>
    </source>
</reference>
<reference key="4">
    <citation type="journal article" date="2013" name="Plant Cell">
        <title>Arabidopsis root initiation defective1, a DEAH-box RNA helicase involved in pre-mRNA splicing, is essential for plant development.</title>
        <authorList>
            <person name="Ohtani M."/>
            <person name="Demura T."/>
            <person name="Sugiyama M."/>
        </authorList>
    </citation>
    <scope>FUNCTION</scope>
    <scope>MUTAGENESIS OF LEU-295</scope>
    <scope>SUBCELLULAR LOCATION</scope>
    <scope>TISSUE SPECIFICITY</scope>
    <scope>DISRUPTION PHENOTYPE</scope>
</reference>
<reference key="5">
    <citation type="journal article" date="2013" name="PLoS ONE">
        <title>Genome-wide comparative in silico analysis of the RNA helicase gene family in Zea mays and Glycine max: a comparison with Arabidopsis and Oryza sativa.</title>
        <authorList>
            <person name="Xu R."/>
            <person name="Zhang S."/>
            <person name="Huang J."/>
            <person name="Zheng C."/>
        </authorList>
    </citation>
    <scope>GENE FAMILY</scope>
</reference>
<comment type="function">
    <text evidence="4">Involved in pre-mRNA splicing. Plays a role during development in processes such as meristem maintenance, leaf morphogenesis and root morphogenesis.</text>
</comment>
<comment type="catalytic activity">
    <reaction>
        <text>ATP + H2O = ADP + phosphate + H(+)</text>
        <dbReference type="Rhea" id="RHEA:13065"/>
        <dbReference type="ChEBI" id="CHEBI:15377"/>
        <dbReference type="ChEBI" id="CHEBI:15378"/>
        <dbReference type="ChEBI" id="CHEBI:30616"/>
        <dbReference type="ChEBI" id="CHEBI:43474"/>
        <dbReference type="ChEBI" id="CHEBI:456216"/>
        <dbReference type="EC" id="3.6.4.13"/>
    </reaction>
</comment>
<comment type="subcellular location">
    <subcellularLocation>
        <location evidence="4">Nucleus</location>
    </subcellularLocation>
    <subcellularLocation>
        <location evidence="4">Nucleus</location>
        <location evidence="4">Nucleolus</location>
    </subcellularLocation>
</comment>
<comment type="tissue specificity">
    <text evidence="4">Widely expressed but spatially and temporally regulated during development.</text>
</comment>
<comment type="disruption phenotype">
    <text evidence="4">Defects in female gametophyte development.</text>
</comment>
<comment type="similarity">
    <text evidence="6">Belongs to the DEAD box helicase family. DEAH subfamily. PRP22 sub-subfamily.</text>
</comment>
<comment type="sequence caution" evidence="6">
    <conflict type="erroneous gene model prediction">
        <sequence resource="EMBL-CDS" id="AAF98584"/>
    </conflict>
</comment>
<comment type="sequence caution" evidence="6">
    <conflict type="frameshift">
        <sequence resource="EMBL" id="BT008611"/>
    </conflict>
</comment>
<keyword id="KW-0067">ATP-binding</keyword>
<keyword id="KW-0347">Helicase</keyword>
<keyword id="KW-0378">Hydrolase</keyword>
<keyword id="KW-0507">mRNA processing</keyword>
<keyword id="KW-0508">mRNA splicing</keyword>
<keyword id="KW-0547">Nucleotide-binding</keyword>
<keyword id="KW-0539">Nucleus</keyword>
<keyword id="KW-1185">Reference proteome</keyword>
<keyword id="KW-0747">Spliceosome</keyword>
<keyword id="KW-0809">Transit peptide</keyword>
<dbReference type="EC" id="3.6.4.13"/>
<dbReference type="EMBL" id="AC013427">
    <property type="protein sequence ID" value="AAF98584.1"/>
    <property type="status" value="ALT_SEQ"/>
    <property type="molecule type" value="Genomic_DNA"/>
</dbReference>
<dbReference type="EMBL" id="CP002684">
    <property type="protein sequence ID" value="AEE30683.1"/>
    <property type="molecule type" value="Genomic_DNA"/>
</dbReference>
<dbReference type="EMBL" id="BT008611">
    <property type="status" value="NOT_ANNOTATED_CDS"/>
    <property type="molecule type" value="mRNA"/>
</dbReference>
<dbReference type="PIR" id="D86390">
    <property type="entry name" value="D86390"/>
</dbReference>
<dbReference type="RefSeq" id="NP_173961.3">
    <property type="nucleotide sequence ID" value="NM_102401.4"/>
</dbReference>
<dbReference type="SMR" id="F4IE66"/>
<dbReference type="FunCoup" id="F4IE66">
    <property type="interactions" value="1098"/>
</dbReference>
<dbReference type="STRING" id="3702.F4IE66"/>
<dbReference type="GlyGen" id="F4IE66">
    <property type="glycosylation" value="1 site"/>
</dbReference>
<dbReference type="iPTMnet" id="F4IE66"/>
<dbReference type="PaxDb" id="3702-AT1G26370.1"/>
<dbReference type="ProteomicsDB" id="226218"/>
<dbReference type="EnsemblPlants" id="AT1G26370.1">
    <property type="protein sequence ID" value="AT1G26370.1"/>
    <property type="gene ID" value="AT1G26370"/>
</dbReference>
<dbReference type="GeneID" id="839179"/>
<dbReference type="Gramene" id="AT1G26370.1">
    <property type="protein sequence ID" value="AT1G26370.1"/>
    <property type="gene ID" value="AT1G26370"/>
</dbReference>
<dbReference type="KEGG" id="ath:AT1G26370"/>
<dbReference type="Araport" id="AT1G26370"/>
<dbReference type="TAIR" id="AT1G26370">
    <property type="gene designation" value="RID1"/>
</dbReference>
<dbReference type="eggNOG" id="KOG0922">
    <property type="taxonomic scope" value="Eukaryota"/>
</dbReference>
<dbReference type="HOGENOM" id="CLU_001832_5_11_1"/>
<dbReference type="InParanoid" id="F4IE66"/>
<dbReference type="OMA" id="CHENFLH"/>
<dbReference type="OrthoDB" id="10253254at2759"/>
<dbReference type="CD-CODE" id="4299E36E">
    <property type="entry name" value="Nucleolus"/>
</dbReference>
<dbReference type="PRO" id="PR:F4IE66"/>
<dbReference type="Proteomes" id="UP000006548">
    <property type="component" value="Chromosome 1"/>
</dbReference>
<dbReference type="ExpressionAtlas" id="F4IE66">
    <property type="expression patterns" value="baseline and differential"/>
</dbReference>
<dbReference type="GO" id="GO:0005730">
    <property type="term" value="C:nucleolus"/>
    <property type="evidence" value="ECO:0000314"/>
    <property type="project" value="UniProtKB"/>
</dbReference>
<dbReference type="GO" id="GO:0005634">
    <property type="term" value="C:nucleus"/>
    <property type="evidence" value="ECO:0000314"/>
    <property type="project" value="UniProtKB"/>
</dbReference>
<dbReference type="GO" id="GO:0005681">
    <property type="term" value="C:spliceosomal complex"/>
    <property type="evidence" value="ECO:0007669"/>
    <property type="project" value="UniProtKB-KW"/>
</dbReference>
<dbReference type="GO" id="GO:0005524">
    <property type="term" value="F:ATP binding"/>
    <property type="evidence" value="ECO:0007669"/>
    <property type="project" value="UniProtKB-KW"/>
</dbReference>
<dbReference type="GO" id="GO:0016887">
    <property type="term" value="F:ATP hydrolysis activity"/>
    <property type="evidence" value="ECO:0007669"/>
    <property type="project" value="InterPro"/>
</dbReference>
<dbReference type="GO" id="GO:0003676">
    <property type="term" value="F:nucleic acid binding"/>
    <property type="evidence" value="ECO:0007669"/>
    <property type="project" value="InterPro"/>
</dbReference>
<dbReference type="GO" id="GO:0003724">
    <property type="term" value="F:RNA helicase activity"/>
    <property type="evidence" value="ECO:0007669"/>
    <property type="project" value="UniProtKB-EC"/>
</dbReference>
<dbReference type="GO" id="GO:0006397">
    <property type="term" value="P:mRNA processing"/>
    <property type="evidence" value="ECO:0007669"/>
    <property type="project" value="UniProtKB-KW"/>
</dbReference>
<dbReference type="GO" id="GO:0043484">
    <property type="term" value="P:regulation of RNA splicing"/>
    <property type="evidence" value="ECO:0000315"/>
    <property type="project" value="UniProtKB"/>
</dbReference>
<dbReference type="GO" id="GO:0008380">
    <property type="term" value="P:RNA splicing"/>
    <property type="evidence" value="ECO:0007669"/>
    <property type="project" value="UniProtKB-KW"/>
</dbReference>
<dbReference type="CDD" id="cd17978">
    <property type="entry name" value="DEXHc_DHX33"/>
    <property type="match status" value="1"/>
</dbReference>
<dbReference type="CDD" id="cd18791">
    <property type="entry name" value="SF2_C_RHA"/>
    <property type="match status" value="1"/>
</dbReference>
<dbReference type="FunFam" id="3.40.50.300:FF:000007">
    <property type="entry name" value="Pre-mRNA-splicing factor ATP-dependent RNA helicase"/>
    <property type="match status" value="1"/>
</dbReference>
<dbReference type="Gene3D" id="1.20.120.1080">
    <property type="match status" value="1"/>
</dbReference>
<dbReference type="Gene3D" id="3.40.50.300">
    <property type="entry name" value="P-loop containing nucleotide triphosphate hydrolases"/>
    <property type="match status" value="2"/>
</dbReference>
<dbReference type="InterPro" id="IPR003593">
    <property type="entry name" value="AAA+_ATPase"/>
</dbReference>
<dbReference type="InterPro" id="IPR011709">
    <property type="entry name" value="DEAD-box_helicase_OB_fold"/>
</dbReference>
<dbReference type="InterPro" id="IPR011545">
    <property type="entry name" value="DEAD/DEAH_box_helicase_dom"/>
</dbReference>
<dbReference type="InterPro" id="IPR048333">
    <property type="entry name" value="HA2_WH"/>
</dbReference>
<dbReference type="InterPro" id="IPR007502">
    <property type="entry name" value="Helicase-assoc_dom"/>
</dbReference>
<dbReference type="InterPro" id="IPR014001">
    <property type="entry name" value="Helicase_ATP-bd"/>
</dbReference>
<dbReference type="InterPro" id="IPR001650">
    <property type="entry name" value="Helicase_C-like"/>
</dbReference>
<dbReference type="InterPro" id="IPR027417">
    <property type="entry name" value="P-loop_NTPase"/>
</dbReference>
<dbReference type="PANTHER" id="PTHR18934">
    <property type="entry name" value="ATP-DEPENDENT RNA HELICASE"/>
    <property type="match status" value="1"/>
</dbReference>
<dbReference type="PANTHER" id="PTHR18934:SF118">
    <property type="entry name" value="ATP-DEPENDENT RNA HELICASE DHX33"/>
    <property type="match status" value="1"/>
</dbReference>
<dbReference type="Pfam" id="PF00270">
    <property type="entry name" value="DEAD"/>
    <property type="match status" value="1"/>
</dbReference>
<dbReference type="Pfam" id="PF21010">
    <property type="entry name" value="HA2_C"/>
    <property type="match status" value="1"/>
</dbReference>
<dbReference type="Pfam" id="PF04408">
    <property type="entry name" value="HA2_N"/>
    <property type="match status" value="1"/>
</dbReference>
<dbReference type="Pfam" id="PF00271">
    <property type="entry name" value="Helicase_C"/>
    <property type="match status" value="1"/>
</dbReference>
<dbReference type="Pfam" id="PF07717">
    <property type="entry name" value="OB_NTP_bind"/>
    <property type="match status" value="1"/>
</dbReference>
<dbReference type="SMART" id="SM00382">
    <property type="entry name" value="AAA"/>
    <property type="match status" value="1"/>
</dbReference>
<dbReference type="SMART" id="SM00487">
    <property type="entry name" value="DEXDc"/>
    <property type="match status" value="1"/>
</dbReference>
<dbReference type="SMART" id="SM00847">
    <property type="entry name" value="HA2"/>
    <property type="match status" value="1"/>
</dbReference>
<dbReference type="SMART" id="SM00490">
    <property type="entry name" value="HELICc"/>
    <property type="match status" value="1"/>
</dbReference>
<dbReference type="SUPFAM" id="SSF52540">
    <property type="entry name" value="P-loop containing nucleoside triphosphate hydrolases"/>
    <property type="match status" value="1"/>
</dbReference>
<dbReference type="PROSITE" id="PS51192">
    <property type="entry name" value="HELICASE_ATP_BIND_1"/>
    <property type="match status" value="1"/>
</dbReference>
<dbReference type="PROSITE" id="PS51194">
    <property type="entry name" value="HELICASE_CTER"/>
    <property type="match status" value="1"/>
</dbReference>
<protein>
    <recommendedName>
        <fullName>Pre-mRNA-splicing factor ATP-dependent RNA helicase DEAH10</fullName>
        <ecNumber>3.6.4.13</ecNumber>
    </recommendedName>
    <alternativeName>
        <fullName evidence="5">DEAH RNA helicase homolog PRP22</fullName>
    </alternativeName>
    <alternativeName>
        <fullName evidence="5">Protein ROOT INITIATION DEFECTIVE 1</fullName>
    </alternativeName>
</protein>
<sequence length="717" mass="80515">MPSMAQGELKSFVQNSRPNPKSPTVSPFSMRQKIAEHRRSLPIASVEKRLVEEVQKNDILIIVGETGSGKTTQLPQFLYNAGFCREGKMIGITQPRRIAAVTVAKRVAEECEVQLGQKVGYSIRFDDTTSGSTRLKYMTDGLLLREALLDPHLSRYSVIIVDEAHDRSVHTDVLLALLKKIQRTRSQPVSEKTEFGNVASQVQTTTRDANGPQQNGVLKGYQGRKLSPLKLIIMSASLDARVFSEYFGGAKAVHVQGRQFPVDILYTVHPESDYVDATLVTIFQIHFEEKPGDILVFLTGQDEIESVERLVQERLQNIPEDKRKLLPLAIFSALPSEQQMKVFAPAPTGFRKVILATNIAETSITIPGIRYVIDPGFVKARSYDPSKGMESLDVVPASKAQTLQRSGRAGREGPGKSFRLYPEREFEKLEDSTKPEIKRCNLSNIILQLKALGIDDIVGFDFIDKPSRGAIIKALAELHSLGALADDGKLENPVGYQMSRLPLEPVYSKALILANQFNCLEEMLITVAVLSVESIFYDPREKREEARTSKNHFASVEGDHLTYLSVYRESDEFLEKRKAAGSGNNIDKIMKKWCKENYVNSRSLKHARDIYRQIREHVEQIGFNVSSCGNDMLAFRRCLAASFFLKAAQRQLDGTYRALESGEVVHIHPTSVLFRAKPECVIFNELMQTSKKYIKNLTIIDSLWLSELAPHHFQTAE</sequence>
<accession>F4IE66</accession>
<accession>Q9FZC3</accession>
<organism>
    <name type="scientific">Arabidopsis thaliana</name>
    <name type="common">Mouse-ear cress</name>
    <dbReference type="NCBI Taxonomy" id="3702"/>
    <lineage>
        <taxon>Eukaryota</taxon>
        <taxon>Viridiplantae</taxon>
        <taxon>Streptophyta</taxon>
        <taxon>Embryophyta</taxon>
        <taxon>Tracheophyta</taxon>
        <taxon>Spermatophyta</taxon>
        <taxon>Magnoliopsida</taxon>
        <taxon>eudicotyledons</taxon>
        <taxon>Gunneridae</taxon>
        <taxon>Pentapetalae</taxon>
        <taxon>rosids</taxon>
        <taxon>malvids</taxon>
        <taxon>Brassicales</taxon>
        <taxon>Brassicaceae</taxon>
        <taxon>Camelineae</taxon>
        <taxon>Arabidopsis</taxon>
    </lineage>
</organism>
<feature type="chain" id="PRO_0000434942" description="Pre-mRNA-splicing factor ATP-dependent RNA helicase DEAH10">
    <location>
        <begin position="1"/>
        <end position="717"/>
    </location>
</feature>
<feature type="domain" description="Helicase ATP-binding" evidence="1">
    <location>
        <begin position="51"/>
        <end position="256"/>
    </location>
</feature>
<feature type="domain" description="Helicase C-terminal" evidence="2">
    <location>
        <begin position="278"/>
        <end position="453"/>
    </location>
</feature>
<feature type="region of interest" description="Disordered" evidence="3">
    <location>
        <begin position="1"/>
        <end position="29"/>
    </location>
</feature>
<feature type="short sequence motif" description="DEAH box" evidence="1">
    <location>
        <begin position="162"/>
        <end position="165"/>
    </location>
</feature>
<feature type="compositionally biased region" description="Polar residues" evidence="3">
    <location>
        <begin position="12"/>
        <end position="29"/>
    </location>
</feature>
<feature type="binding site" evidence="1">
    <location>
        <begin position="64"/>
        <end position="71"/>
    </location>
    <ligand>
        <name>ATP</name>
        <dbReference type="ChEBI" id="CHEBI:30616"/>
    </ligand>
</feature>
<feature type="mutagenesis site" description="In rid1-1; Reduced efficiency of pre-mRNA splicing.">
    <original>L</original>
    <variation>P</variation>
    <location>
        <position position="295"/>
    </location>
</feature>
<gene>
    <name evidence="5" type="primary">RID1</name>
    <name evidence="7" type="ordered locus">At1g26370</name>
    <name evidence="8" type="ORF">T1K7.25</name>
</gene>